<keyword id="KW-0997">Cell inner membrane</keyword>
<keyword id="KW-1003">Cell membrane</keyword>
<keyword id="KW-0448">Lipopolysaccharide biosynthesis</keyword>
<keyword id="KW-0472">Membrane</keyword>
<keyword id="KW-1185">Reference proteome</keyword>
<keyword id="KW-0735">Signal-anchor</keyword>
<keyword id="KW-0808">Transferase</keyword>
<keyword id="KW-0812">Transmembrane</keyword>
<keyword id="KW-1133">Transmembrane helix</keyword>
<protein>
    <recommendedName>
        <fullName>3-deoxy-D-manno-octulosonic acid transferase</fullName>
        <shortName>Kdo transferase</shortName>
        <ecNumber>2.4.99.12</ecNumber>
        <ecNumber>2.4.99.13</ecNumber>
    </recommendedName>
    <alternativeName>
        <fullName>Bifunctional Kdo transferase</fullName>
    </alternativeName>
    <alternativeName>
        <fullName>Kdo-lipid IV(A) 3-deoxy-D-manno-octulosonic acid transferase</fullName>
    </alternativeName>
    <alternativeName>
        <fullName>Lipid IV(A) 3-deoxy-D-manno-octulosonic acid transferase</fullName>
    </alternativeName>
</protein>
<gene>
    <name type="primary">waaA</name>
    <name type="synonym">kdtA</name>
    <name type="ordered locus">c4457</name>
</gene>
<comment type="function">
    <text evidence="2">Involved in lipopolysaccharide (LPS) biosynthesis. Catalyzes the transfer of two 3-deoxy-D-manno-octulosonate (Kdo) residues from CMP-Kdo to lipid IV(A), the tetraacyldisaccharide-1,4'-bisphosphate precursor of lipid A.</text>
</comment>
<comment type="catalytic activity">
    <reaction>
        <text>lipid IVA (E. coli) + CMP-3-deoxy-beta-D-manno-octulosonate = alpha-Kdo-(2-&gt;6)-lipid IVA (E. coli) + CMP + H(+)</text>
        <dbReference type="Rhea" id="RHEA:28066"/>
        <dbReference type="ChEBI" id="CHEBI:15378"/>
        <dbReference type="ChEBI" id="CHEBI:58603"/>
        <dbReference type="ChEBI" id="CHEBI:60364"/>
        <dbReference type="ChEBI" id="CHEBI:60377"/>
        <dbReference type="ChEBI" id="CHEBI:85987"/>
        <dbReference type="EC" id="2.4.99.12"/>
    </reaction>
</comment>
<comment type="catalytic activity">
    <reaction>
        <text>alpha-Kdo-(2-&gt;6)-lipid IVA (E. coli) + CMP-3-deoxy-beta-D-manno-octulosonate = alpha-Kdo-(2-&gt;4)-alpha-Kdo-(2-&gt;6)-lipid IVA (E. coli) + CMP + H(+)</text>
        <dbReference type="Rhea" id="RHEA:28062"/>
        <dbReference type="ChEBI" id="CHEBI:15378"/>
        <dbReference type="ChEBI" id="CHEBI:60364"/>
        <dbReference type="ChEBI" id="CHEBI:60365"/>
        <dbReference type="ChEBI" id="CHEBI:60377"/>
        <dbReference type="ChEBI" id="CHEBI:85987"/>
        <dbReference type="EC" id="2.4.99.13"/>
    </reaction>
</comment>
<comment type="pathway">
    <text>Glycolipid biosynthesis; KDO(2)-lipid A biosynthesis; KDO(2)-lipid A from CMP-3-deoxy-D-manno-octulosonate and lipid IV(A): step 1/4.</text>
</comment>
<comment type="pathway">
    <text>Glycolipid biosynthesis; KDO(2)-lipid A biosynthesis; KDO(2)-lipid A from CMP-3-deoxy-D-manno-octulosonate and lipid IV(A): step 2/4.</text>
</comment>
<comment type="pathway">
    <text>Bacterial outer membrane biogenesis; LPS core biosynthesis.</text>
</comment>
<comment type="subcellular location">
    <subcellularLocation>
        <location evidence="1">Cell inner membrane</location>
        <topology evidence="1">Single-pass membrane protein</topology>
        <orientation evidence="1">Cytoplasmic side</orientation>
    </subcellularLocation>
</comment>
<comment type="similarity">
    <text evidence="4">Belongs to the glycosyltransferase group 1 family. Glycosyltransferase 30 subfamily.</text>
</comment>
<sequence>MLELLYTALLYLIQPLIWIRLWVRGRKAPAYRKRWGERYGFYRHPLKPGGIMLHSVSVGETLAAIPLVRALRHRYPDLPITVTTMTPTGSERVQSAFGKDVQHVYLPYDLPDALNRFLNKVDPKLVLIMETELWPNLIAALHKRKIPLVIANARLSARSAAGYAKLGKFVRRLLRRITLIAAQNEEDGARFVALGAKNNQVTVTGSLKFDISVTPQLAAKAVTLRRQWAPHRPVWIATSTHEGEESVVIAAHQALLQQFPNLLLILVPRHPERFPDAINLVRQAGLSYITRSSGEVPSTSTQVVVGDTMGELMLLYGIADLAFVGGSLVERGGHNPLEAAAHAIPVLMGPHTFNFKDICARLEQASGLITVTDATTLAKEVSSLLTDADYRSFYGRHAVEVLYQNQGALQRLLQLLEPYLPPKTH</sequence>
<name>KDTA_ECOL6</name>
<accession>P0AC76</accession>
<accession>P23282</accession>
<proteinExistence type="inferred from homology"/>
<dbReference type="EC" id="2.4.99.12"/>
<dbReference type="EC" id="2.4.99.13"/>
<dbReference type="EMBL" id="AE014075">
    <property type="protein sequence ID" value="AAN82893.1"/>
    <property type="molecule type" value="Genomic_DNA"/>
</dbReference>
<dbReference type="RefSeq" id="WP_000891564.1">
    <property type="nucleotide sequence ID" value="NZ_CP051263.1"/>
</dbReference>
<dbReference type="SMR" id="P0AC76"/>
<dbReference type="STRING" id="199310.c4457"/>
<dbReference type="CAZy" id="GT30">
    <property type="family name" value="Glycosyltransferase Family 30"/>
</dbReference>
<dbReference type="GeneID" id="93778346"/>
<dbReference type="KEGG" id="ecc:c4457"/>
<dbReference type="eggNOG" id="COG1519">
    <property type="taxonomic scope" value="Bacteria"/>
</dbReference>
<dbReference type="HOGENOM" id="CLU_036146_2_0_6"/>
<dbReference type="BioCyc" id="ECOL199310:C4457-MONOMER"/>
<dbReference type="UniPathway" id="UPA00360">
    <property type="reaction ID" value="UER00483"/>
</dbReference>
<dbReference type="UniPathway" id="UPA00360">
    <property type="reaction ID" value="UER00484"/>
</dbReference>
<dbReference type="UniPathway" id="UPA00958"/>
<dbReference type="Proteomes" id="UP000001410">
    <property type="component" value="Chromosome"/>
</dbReference>
<dbReference type="GO" id="GO:0005886">
    <property type="term" value="C:plasma membrane"/>
    <property type="evidence" value="ECO:0007669"/>
    <property type="project" value="UniProtKB-SubCell"/>
</dbReference>
<dbReference type="GO" id="GO:0043842">
    <property type="term" value="F:Kdo transferase activity"/>
    <property type="evidence" value="ECO:0007669"/>
    <property type="project" value="UniProtKB-EC"/>
</dbReference>
<dbReference type="GO" id="GO:0036104">
    <property type="term" value="P:Kdo2-lipid A biosynthetic process"/>
    <property type="evidence" value="ECO:0007669"/>
    <property type="project" value="UniProtKB-UniPathway"/>
</dbReference>
<dbReference type="GO" id="GO:0009245">
    <property type="term" value="P:lipid A biosynthetic process"/>
    <property type="evidence" value="ECO:0007669"/>
    <property type="project" value="TreeGrafter"/>
</dbReference>
<dbReference type="GO" id="GO:0009244">
    <property type="term" value="P:lipopolysaccharide core region biosynthetic process"/>
    <property type="evidence" value="ECO:0007669"/>
    <property type="project" value="UniProtKB-UniPathway"/>
</dbReference>
<dbReference type="FunFam" id="3.40.50.11720:FF:000001">
    <property type="entry name" value="3-deoxy-D-manno-octulosonic acid transferase"/>
    <property type="match status" value="1"/>
</dbReference>
<dbReference type="FunFam" id="3.40.50.2000:FF:000032">
    <property type="entry name" value="3-deoxy-D-manno-octulosonic acid transferase"/>
    <property type="match status" value="1"/>
</dbReference>
<dbReference type="Gene3D" id="3.40.50.11720">
    <property type="entry name" value="3-Deoxy-D-manno-octulosonic-acid transferase, N-terminal domain"/>
    <property type="match status" value="1"/>
</dbReference>
<dbReference type="Gene3D" id="3.40.50.2000">
    <property type="entry name" value="Glycogen Phosphorylase B"/>
    <property type="match status" value="1"/>
</dbReference>
<dbReference type="InterPro" id="IPR001296">
    <property type="entry name" value="Glyco_trans_1"/>
</dbReference>
<dbReference type="InterPro" id="IPR007507">
    <property type="entry name" value="Glycos_transf_N"/>
</dbReference>
<dbReference type="InterPro" id="IPR038107">
    <property type="entry name" value="Glycos_transf_N_sf"/>
</dbReference>
<dbReference type="InterPro" id="IPR039901">
    <property type="entry name" value="Kdotransferase"/>
</dbReference>
<dbReference type="NCBIfam" id="NF004385">
    <property type="entry name" value="PRK05749.1-1"/>
    <property type="match status" value="1"/>
</dbReference>
<dbReference type="NCBIfam" id="NF004388">
    <property type="entry name" value="PRK05749.1-4"/>
    <property type="match status" value="1"/>
</dbReference>
<dbReference type="PANTHER" id="PTHR42755:SF1">
    <property type="entry name" value="3-DEOXY-D-MANNO-OCTULOSONIC ACID TRANSFERASE, MITOCHONDRIAL-RELATED"/>
    <property type="match status" value="1"/>
</dbReference>
<dbReference type="PANTHER" id="PTHR42755">
    <property type="entry name" value="3-DEOXY-MANNO-OCTULOSONATE CYTIDYLYLTRANSFERASE"/>
    <property type="match status" value="1"/>
</dbReference>
<dbReference type="Pfam" id="PF00534">
    <property type="entry name" value="Glycos_transf_1"/>
    <property type="match status" value="1"/>
</dbReference>
<dbReference type="Pfam" id="PF04413">
    <property type="entry name" value="Glycos_transf_N"/>
    <property type="match status" value="1"/>
</dbReference>
<dbReference type="SUPFAM" id="SSF53756">
    <property type="entry name" value="UDP-Glycosyltransferase/glycogen phosphorylase"/>
    <property type="match status" value="1"/>
</dbReference>
<organism>
    <name type="scientific">Escherichia coli O6:H1 (strain CFT073 / ATCC 700928 / UPEC)</name>
    <dbReference type="NCBI Taxonomy" id="199310"/>
    <lineage>
        <taxon>Bacteria</taxon>
        <taxon>Pseudomonadati</taxon>
        <taxon>Pseudomonadota</taxon>
        <taxon>Gammaproteobacteria</taxon>
        <taxon>Enterobacterales</taxon>
        <taxon>Enterobacteriaceae</taxon>
        <taxon>Escherichia</taxon>
    </lineage>
</organism>
<feature type="chain" id="PRO_0000080288" description="3-deoxy-D-manno-octulosonic acid transferase">
    <location>
        <begin position="1"/>
        <end position="425"/>
    </location>
</feature>
<feature type="transmembrane region" description="Helical; Signal-anchor" evidence="3">
    <location>
        <begin position="3"/>
        <end position="23"/>
    </location>
</feature>
<feature type="active site" description="Proton acceptor" evidence="1">
    <location>
        <position position="60"/>
    </location>
</feature>
<feature type="binding site" evidence="1">
    <location>
        <begin position="268"/>
        <end position="269"/>
    </location>
    <ligand>
        <name>CMP</name>
        <dbReference type="ChEBI" id="CHEBI:60377"/>
    </ligand>
</feature>
<feature type="binding site" evidence="1">
    <location>
        <begin position="309"/>
        <end position="311"/>
    </location>
    <ligand>
        <name>CMP</name>
        <dbReference type="ChEBI" id="CHEBI:60377"/>
    </ligand>
</feature>
<feature type="binding site" evidence="1">
    <location>
        <begin position="335"/>
        <end position="338"/>
    </location>
    <ligand>
        <name>CMP</name>
        <dbReference type="ChEBI" id="CHEBI:60377"/>
    </ligand>
</feature>
<feature type="site" description="Transition state stabilizer" evidence="1">
    <location>
        <position position="130"/>
    </location>
</feature>
<feature type="site" description="Transition state stabilizer" evidence="1">
    <location>
        <position position="208"/>
    </location>
</feature>
<evidence type="ECO:0000250" key="1"/>
<evidence type="ECO:0000250" key="2">
    <source>
        <dbReference type="UniProtKB" id="P0AC75"/>
    </source>
</evidence>
<evidence type="ECO:0000255" key="3"/>
<evidence type="ECO:0000305" key="4"/>
<reference key="1">
    <citation type="journal article" date="2002" name="Proc. Natl. Acad. Sci. U.S.A.">
        <title>Extensive mosaic structure revealed by the complete genome sequence of uropathogenic Escherichia coli.</title>
        <authorList>
            <person name="Welch R.A."/>
            <person name="Burland V."/>
            <person name="Plunkett G. III"/>
            <person name="Redford P."/>
            <person name="Roesch P."/>
            <person name="Rasko D."/>
            <person name="Buckles E.L."/>
            <person name="Liou S.-R."/>
            <person name="Boutin A."/>
            <person name="Hackett J."/>
            <person name="Stroud D."/>
            <person name="Mayhew G.F."/>
            <person name="Rose D.J."/>
            <person name="Zhou S."/>
            <person name="Schwartz D.C."/>
            <person name="Perna N.T."/>
            <person name="Mobley H.L.T."/>
            <person name="Donnenberg M.S."/>
            <person name="Blattner F.R."/>
        </authorList>
    </citation>
    <scope>NUCLEOTIDE SEQUENCE [LARGE SCALE GENOMIC DNA]</scope>
    <source>
        <strain>CFT073 / ATCC 700928 / UPEC</strain>
    </source>
</reference>